<reference key="1">
    <citation type="journal article" date="2006" name="Proc. Natl. Acad. Sci. U.S.A.">
        <title>Comparative genomics of the lactic acid bacteria.</title>
        <authorList>
            <person name="Makarova K.S."/>
            <person name="Slesarev A."/>
            <person name="Wolf Y.I."/>
            <person name="Sorokin A."/>
            <person name="Mirkin B."/>
            <person name="Koonin E.V."/>
            <person name="Pavlov A."/>
            <person name="Pavlova N."/>
            <person name="Karamychev V."/>
            <person name="Polouchine N."/>
            <person name="Shakhova V."/>
            <person name="Grigoriev I."/>
            <person name="Lou Y."/>
            <person name="Rohksar D."/>
            <person name="Lucas S."/>
            <person name="Huang K."/>
            <person name="Goodstein D.M."/>
            <person name="Hawkins T."/>
            <person name="Plengvidhya V."/>
            <person name="Welker D."/>
            <person name="Hughes J."/>
            <person name="Goh Y."/>
            <person name="Benson A."/>
            <person name="Baldwin K."/>
            <person name="Lee J.-H."/>
            <person name="Diaz-Muniz I."/>
            <person name="Dosti B."/>
            <person name="Smeianov V."/>
            <person name="Wechter W."/>
            <person name="Barabote R."/>
            <person name="Lorca G."/>
            <person name="Altermann E."/>
            <person name="Barrangou R."/>
            <person name="Ganesan B."/>
            <person name="Xie Y."/>
            <person name="Rawsthorne H."/>
            <person name="Tamir D."/>
            <person name="Parker C."/>
            <person name="Breidt F."/>
            <person name="Broadbent J.R."/>
            <person name="Hutkins R."/>
            <person name="O'Sullivan D."/>
            <person name="Steele J."/>
            <person name="Unlu G."/>
            <person name="Saier M.H. Jr."/>
            <person name="Klaenhammer T."/>
            <person name="Richardson P."/>
            <person name="Kozyavkin S."/>
            <person name="Weimer B.C."/>
            <person name="Mills D.A."/>
        </authorList>
    </citation>
    <scope>NUCLEOTIDE SEQUENCE [LARGE SCALE GENOMIC DNA]</scope>
    <source>
        <strain>SK11</strain>
    </source>
</reference>
<proteinExistence type="inferred from homology"/>
<gene>
    <name evidence="1" type="primary">rpmE2</name>
    <name type="ordered locus">LACR_1703</name>
</gene>
<evidence type="ECO:0000255" key="1">
    <source>
        <dbReference type="HAMAP-Rule" id="MF_00502"/>
    </source>
</evidence>
<evidence type="ECO:0000305" key="2"/>
<dbReference type="EMBL" id="CP000425">
    <property type="protein sequence ID" value="ABJ73199.1"/>
    <property type="molecule type" value="Genomic_DNA"/>
</dbReference>
<dbReference type="RefSeq" id="WP_011676633.1">
    <property type="nucleotide sequence ID" value="NC_008527.1"/>
</dbReference>
<dbReference type="SMR" id="Q02XX3"/>
<dbReference type="KEGG" id="llc:LACR_1703"/>
<dbReference type="HOGENOM" id="CLU_114306_2_2_9"/>
<dbReference type="Proteomes" id="UP000000240">
    <property type="component" value="Chromosome"/>
</dbReference>
<dbReference type="GO" id="GO:1990904">
    <property type="term" value="C:ribonucleoprotein complex"/>
    <property type="evidence" value="ECO:0007669"/>
    <property type="project" value="UniProtKB-KW"/>
</dbReference>
<dbReference type="GO" id="GO:0005840">
    <property type="term" value="C:ribosome"/>
    <property type="evidence" value="ECO:0007669"/>
    <property type="project" value="UniProtKB-KW"/>
</dbReference>
<dbReference type="GO" id="GO:0003735">
    <property type="term" value="F:structural constituent of ribosome"/>
    <property type="evidence" value="ECO:0007669"/>
    <property type="project" value="InterPro"/>
</dbReference>
<dbReference type="GO" id="GO:0006412">
    <property type="term" value="P:translation"/>
    <property type="evidence" value="ECO:0007669"/>
    <property type="project" value="UniProtKB-UniRule"/>
</dbReference>
<dbReference type="Gene3D" id="4.10.830.30">
    <property type="entry name" value="Ribosomal protein L31"/>
    <property type="match status" value="1"/>
</dbReference>
<dbReference type="HAMAP" id="MF_00502">
    <property type="entry name" value="Ribosomal_bL31_2"/>
    <property type="match status" value="1"/>
</dbReference>
<dbReference type="InterPro" id="IPR034704">
    <property type="entry name" value="Ribosomal_bL28/bL31-like_sf"/>
</dbReference>
<dbReference type="InterPro" id="IPR002150">
    <property type="entry name" value="Ribosomal_bL31"/>
</dbReference>
<dbReference type="InterPro" id="IPR027493">
    <property type="entry name" value="Ribosomal_bL31_B"/>
</dbReference>
<dbReference type="InterPro" id="IPR042105">
    <property type="entry name" value="Ribosomal_bL31_sf"/>
</dbReference>
<dbReference type="NCBIfam" id="TIGR00105">
    <property type="entry name" value="L31"/>
    <property type="match status" value="1"/>
</dbReference>
<dbReference type="NCBIfam" id="NF002462">
    <property type="entry name" value="PRK01678.1"/>
    <property type="match status" value="1"/>
</dbReference>
<dbReference type="PANTHER" id="PTHR33280">
    <property type="entry name" value="50S RIBOSOMAL PROTEIN L31, CHLOROPLASTIC"/>
    <property type="match status" value="1"/>
</dbReference>
<dbReference type="PANTHER" id="PTHR33280:SF1">
    <property type="entry name" value="LARGE RIBOSOMAL SUBUNIT PROTEIN BL31C"/>
    <property type="match status" value="1"/>
</dbReference>
<dbReference type="Pfam" id="PF01197">
    <property type="entry name" value="Ribosomal_L31"/>
    <property type="match status" value="1"/>
</dbReference>
<dbReference type="PRINTS" id="PR01249">
    <property type="entry name" value="RIBOSOMALL31"/>
</dbReference>
<dbReference type="SUPFAM" id="SSF143800">
    <property type="entry name" value="L28p-like"/>
    <property type="match status" value="1"/>
</dbReference>
<dbReference type="PROSITE" id="PS01143">
    <property type="entry name" value="RIBOSOMAL_L31"/>
    <property type="match status" value="1"/>
</dbReference>
<feature type="chain" id="PRO_1000014701" description="Large ribosomal subunit protein bL31B">
    <location>
        <begin position="1"/>
        <end position="81"/>
    </location>
</feature>
<sequence length="81" mass="9352">MKQNIHPNYQPVVFMDTTTGYKFLTGSTKGSKETVEWEDGNTYPLIRVEISSDSHPFYTGRQKFQAADGRIARFEKKYGKQ</sequence>
<name>RL31B_LACLS</name>
<protein>
    <recommendedName>
        <fullName evidence="1">Large ribosomal subunit protein bL31B</fullName>
    </recommendedName>
    <alternativeName>
        <fullName evidence="2">50S ribosomal protein L31 type B</fullName>
    </alternativeName>
</protein>
<accession>Q02XX3</accession>
<organism>
    <name type="scientific">Lactococcus lactis subsp. cremoris (strain SK11)</name>
    <dbReference type="NCBI Taxonomy" id="272622"/>
    <lineage>
        <taxon>Bacteria</taxon>
        <taxon>Bacillati</taxon>
        <taxon>Bacillota</taxon>
        <taxon>Bacilli</taxon>
        <taxon>Lactobacillales</taxon>
        <taxon>Streptococcaceae</taxon>
        <taxon>Lactococcus</taxon>
        <taxon>Lactococcus cremoris subsp. cremoris</taxon>
    </lineage>
</organism>
<keyword id="KW-0687">Ribonucleoprotein</keyword>
<keyword id="KW-0689">Ribosomal protein</keyword>
<comment type="subunit">
    <text evidence="1">Part of the 50S ribosomal subunit.</text>
</comment>
<comment type="similarity">
    <text evidence="1">Belongs to the bacterial ribosomal protein bL31 family. Type B subfamily.</text>
</comment>